<accession>C3P3L1</accession>
<evidence type="ECO:0000255" key="1">
    <source>
        <dbReference type="HAMAP-Rule" id="MF_00632"/>
    </source>
</evidence>
<protein>
    <recommendedName>
        <fullName evidence="1">Nucleotide-binding protein BAA_1246</fullName>
    </recommendedName>
</protein>
<proteinExistence type="inferred from homology"/>
<gene>
    <name type="ordered locus">BAA_1246</name>
</gene>
<sequence>MAKDSSFDIVSKVELPEVTNAINTALKEIQNRYDFKGSKSDIKLEKEVLVLTSDDEFKLEQVKDVLISKLVKRNVPIKNLDYGKVEAAAGNTVRQRATLQQGIDKDNAKKINNIIKEMKLKVKTQVQDDQVRVTAKSRDDLQAVIAAVRSADLPIDVQFINYR</sequence>
<name>Y1246_BACAA</name>
<feature type="chain" id="PRO_1000147279" description="Nucleotide-binding protein BAA_1246">
    <location>
        <begin position="1"/>
        <end position="163"/>
    </location>
</feature>
<keyword id="KW-0547">Nucleotide-binding</keyword>
<comment type="function">
    <text evidence="1">Nucleotide-binding protein.</text>
</comment>
<comment type="similarity">
    <text evidence="1">Belongs to the YajQ family.</text>
</comment>
<dbReference type="EMBL" id="CP001598">
    <property type="protein sequence ID" value="ACQ50782.1"/>
    <property type="molecule type" value="Genomic_DNA"/>
</dbReference>
<dbReference type="RefSeq" id="WP_001040153.1">
    <property type="nucleotide sequence ID" value="NC_012659.1"/>
</dbReference>
<dbReference type="SMR" id="C3P3L1"/>
<dbReference type="KEGG" id="bai:BAA_1246"/>
<dbReference type="HOGENOM" id="CLU_099839_1_0_9"/>
<dbReference type="GO" id="GO:0005829">
    <property type="term" value="C:cytosol"/>
    <property type="evidence" value="ECO:0007669"/>
    <property type="project" value="TreeGrafter"/>
</dbReference>
<dbReference type="GO" id="GO:0000166">
    <property type="term" value="F:nucleotide binding"/>
    <property type="evidence" value="ECO:0007669"/>
    <property type="project" value="TreeGrafter"/>
</dbReference>
<dbReference type="CDD" id="cd11740">
    <property type="entry name" value="YajQ_like"/>
    <property type="match status" value="1"/>
</dbReference>
<dbReference type="FunFam" id="3.30.70.990:FF:000002">
    <property type="entry name" value="UPF0234 protein LEP1GSC067_4943"/>
    <property type="match status" value="1"/>
</dbReference>
<dbReference type="FunFam" id="3.30.70.860:FF:000003">
    <property type="entry name" value="UPF0234 protein YBT020_06460"/>
    <property type="match status" value="1"/>
</dbReference>
<dbReference type="Gene3D" id="3.30.70.860">
    <property type="match status" value="1"/>
</dbReference>
<dbReference type="Gene3D" id="3.30.70.990">
    <property type="entry name" value="YajQ-like, domain 2"/>
    <property type="match status" value="1"/>
</dbReference>
<dbReference type="HAMAP" id="MF_00632">
    <property type="entry name" value="YajQ"/>
    <property type="match status" value="1"/>
</dbReference>
<dbReference type="InterPro" id="IPR007551">
    <property type="entry name" value="DUF520"/>
</dbReference>
<dbReference type="InterPro" id="IPR035571">
    <property type="entry name" value="UPF0234-like_C"/>
</dbReference>
<dbReference type="InterPro" id="IPR035570">
    <property type="entry name" value="UPF0234_N"/>
</dbReference>
<dbReference type="InterPro" id="IPR036183">
    <property type="entry name" value="YajQ-like_sf"/>
</dbReference>
<dbReference type="NCBIfam" id="NF003819">
    <property type="entry name" value="PRK05412.1"/>
    <property type="match status" value="1"/>
</dbReference>
<dbReference type="PANTHER" id="PTHR30476">
    <property type="entry name" value="UPF0234 PROTEIN YAJQ"/>
    <property type="match status" value="1"/>
</dbReference>
<dbReference type="PANTHER" id="PTHR30476:SF0">
    <property type="entry name" value="UPF0234 PROTEIN YAJQ"/>
    <property type="match status" value="1"/>
</dbReference>
<dbReference type="Pfam" id="PF04461">
    <property type="entry name" value="DUF520"/>
    <property type="match status" value="1"/>
</dbReference>
<dbReference type="SUPFAM" id="SSF89963">
    <property type="entry name" value="YajQ-like"/>
    <property type="match status" value="2"/>
</dbReference>
<organism>
    <name type="scientific">Bacillus anthracis (strain A0248)</name>
    <dbReference type="NCBI Taxonomy" id="592021"/>
    <lineage>
        <taxon>Bacteria</taxon>
        <taxon>Bacillati</taxon>
        <taxon>Bacillota</taxon>
        <taxon>Bacilli</taxon>
        <taxon>Bacillales</taxon>
        <taxon>Bacillaceae</taxon>
        <taxon>Bacillus</taxon>
        <taxon>Bacillus cereus group</taxon>
    </lineage>
</organism>
<reference key="1">
    <citation type="submission" date="2009-04" db="EMBL/GenBank/DDBJ databases">
        <title>Genome sequence of Bacillus anthracis A0248.</title>
        <authorList>
            <person name="Dodson R.J."/>
            <person name="Munk A.C."/>
            <person name="Bruce D."/>
            <person name="Detter C."/>
            <person name="Tapia R."/>
            <person name="Sutton G."/>
            <person name="Sims D."/>
            <person name="Brettin T."/>
        </authorList>
    </citation>
    <scope>NUCLEOTIDE SEQUENCE [LARGE SCALE GENOMIC DNA]</scope>
    <source>
        <strain>A0248</strain>
    </source>
</reference>